<keyword id="KW-0496">Mitochondrion</keyword>
<keyword id="KW-1185">Reference proteome</keyword>
<keyword id="KW-0687">Ribonucleoprotein</keyword>
<keyword id="KW-0689">Ribosomal protein</keyword>
<keyword id="KW-0809">Transit peptide</keyword>
<accession>Q9Y7M5</accession>
<evidence type="ECO:0000250" key="1">
    <source>
        <dbReference type="UniProtKB" id="P36520"/>
    </source>
</evidence>
<evidence type="ECO:0000256" key="2">
    <source>
        <dbReference type="SAM" id="MobiDB-lite"/>
    </source>
</evidence>
<evidence type="ECO:0000305" key="3"/>
<feature type="transit peptide" description="Mitochondrion">
    <location>
        <begin position="1"/>
        <end position="78"/>
    </location>
</feature>
<feature type="chain" id="PRO_0000315949" description="Large ribosomal subunit protein uL15m">
    <location>
        <begin position="79"/>
        <end position="254"/>
    </location>
</feature>
<feature type="region of interest" description="Disordered" evidence="2">
    <location>
        <begin position="44"/>
        <end position="104"/>
    </location>
</feature>
<feature type="compositionally biased region" description="Basic residues" evidence="2">
    <location>
        <begin position="64"/>
        <end position="79"/>
    </location>
</feature>
<comment type="function">
    <text evidence="1">Component of the mitochondrial ribosome (mitoribosome), a dedicated translation machinery responsible for the synthesis of mitochondrial genome-encoded proteins, including at least some of the essential transmembrane subunits of the mitochondrial respiratory chain. The mitoribosomes are attached to the mitochondrial inner membrane and translation products are cotranslationally integrated into the membrane.</text>
</comment>
<comment type="subunit">
    <text evidence="1">Component of the mitochondrial large ribosomal subunit (mt-LSU). Mature yeast 74S mitochondrial ribosomes consist of a small (37S) and a large (54S) subunit. The 37S small subunit contains a 15S ribosomal RNA (15S mt-rRNA) and at least 32 different proteins. The 54S large subunit contains a 21S rRNA (21S mt-rRNA) and at least 45 different proteins.</text>
</comment>
<comment type="subcellular location">
    <subcellularLocation>
        <location evidence="1">Mitochondrion</location>
    </subcellularLocation>
</comment>
<comment type="similarity">
    <text evidence="3">Belongs to the universal ribosomal protein uL15 family.</text>
</comment>
<name>RM10_SCHPO</name>
<dbReference type="EMBL" id="CU329671">
    <property type="protein sequence ID" value="CAB42367.2"/>
    <property type="molecule type" value="Genomic_DNA"/>
</dbReference>
<dbReference type="PIR" id="T40787">
    <property type="entry name" value="T40787"/>
</dbReference>
<dbReference type="RefSeq" id="NP_595748.2">
    <property type="nucleotide sequence ID" value="NM_001021648.2"/>
</dbReference>
<dbReference type="SMR" id="Q9Y7M5"/>
<dbReference type="BioGRID" id="277803">
    <property type="interactions" value="2"/>
</dbReference>
<dbReference type="ComplexPortal" id="CPX-10323">
    <property type="entry name" value="54S mitochondrial large ribosomal subunit"/>
</dbReference>
<dbReference type="FunCoup" id="Q9Y7M5">
    <property type="interactions" value="338"/>
</dbReference>
<dbReference type="STRING" id="284812.Q9Y7M5"/>
<dbReference type="PaxDb" id="4896-SPBC9B6.06.1"/>
<dbReference type="EnsemblFungi" id="SPBC9B6.06.1">
    <property type="protein sequence ID" value="SPBC9B6.06.1:pep"/>
    <property type="gene ID" value="SPBC9B6.06"/>
</dbReference>
<dbReference type="GeneID" id="2541290"/>
<dbReference type="KEGG" id="spo:2541290"/>
<dbReference type="PomBase" id="SPBC9B6.06">
    <property type="gene designation" value="mrpl10"/>
</dbReference>
<dbReference type="VEuPathDB" id="FungiDB:SPBC9B6.06"/>
<dbReference type="eggNOG" id="KOG0846">
    <property type="taxonomic scope" value="Eukaryota"/>
</dbReference>
<dbReference type="HOGENOM" id="CLU_055188_5_1_1"/>
<dbReference type="InParanoid" id="Q9Y7M5"/>
<dbReference type="OMA" id="EPGWLVN"/>
<dbReference type="PRO" id="PR:Q9Y7M5"/>
<dbReference type="Proteomes" id="UP000002485">
    <property type="component" value="Chromosome II"/>
</dbReference>
<dbReference type="GO" id="GO:0005762">
    <property type="term" value="C:mitochondrial large ribosomal subunit"/>
    <property type="evidence" value="ECO:0000318"/>
    <property type="project" value="GO_Central"/>
</dbReference>
<dbReference type="GO" id="GO:0003735">
    <property type="term" value="F:structural constituent of ribosome"/>
    <property type="evidence" value="ECO:0000318"/>
    <property type="project" value="GO_Central"/>
</dbReference>
<dbReference type="GO" id="GO:0032543">
    <property type="term" value="P:mitochondrial translation"/>
    <property type="evidence" value="ECO:0000250"/>
    <property type="project" value="PomBase"/>
</dbReference>
<dbReference type="Gene3D" id="3.100.10.10">
    <property type="match status" value="1"/>
</dbReference>
<dbReference type="HAMAP" id="MF_01341">
    <property type="entry name" value="Ribosomal_uL15"/>
    <property type="match status" value="1"/>
</dbReference>
<dbReference type="InterPro" id="IPR030878">
    <property type="entry name" value="Ribosomal_uL15"/>
</dbReference>
<dbReference type="InterPro" id="IPR021131">
    <property type="entry name" value="Ribosomal_uL15/eL18"/>
</dbReference>
<dbReference type="InterPro" id="IPR036227">
    <property type="entry name" value="Ribosomal_uL15/eL18_sf"/>
</dbReference>
<dbReference type="InterPro" id="IPR005749">
    <property type="entry name" value="Ribosomal_uL15_bac-type"/>
</dbReference>
<dbReference type="NCBIfam" id="TIGR01071">
    <property type="entry name" value="rplO_bact"/>
    <property type="match status" value="1"/>
</dbReference>
<dbReference type="PANTHER" id="PTHR12934">
    <property type="entry name" value="50S RIBOSOMAL PROTEIN L15"/>
    <property type="match status" value="1"/>
</dbReference>
<dbReference type="PANTHER" id="PTHR12934:SF11">
    <property type="entry name" value="LARGE RIBOSOMAL SUBUNIT PROTEIN UL15M"/>
    <property type="match status" value="1"/>
</dbReference>
<dbReference type="Pfam" id="PF00828">
    <property type="entry name" value="Ribosomal_L27A"/>
    <property type="match status" value="1"/>
</dbReference>
<dbReference type="SUPFAM" id="SSF52080">
    <property type="entry name" value="Ribosomal proteins L15p and L18e"/>
    <property type="match status" value="1"/>
</dbReference>
<reference key="1">
    <citation type="journal article" date="2002" name="Nature">
        <title>The genome sequence of Schizosaccharomyces pombe.</title>
        <authorList>
            <person name="Wood V."/>
            <person name="Gwilliam R."/>
            <person name="Rajandream M.A."/>
            <person name="Lyne M.H."/>
            <person name="Lyne R."/>
            <person name="Stewart A."/>
            <person name="Sgouros J.G."/>
            <person name="Peat N."/>
            <person name="Hayles J."/>
            <person name="Baker S.G."/>
            <person name="Basham D."/>
            <person name="Bowman S."/>
            <person name="Brooks K."/>
            <person name="Brown D."/>
            <person name="Brown S."/>
            <person name="Chillingworth T."/>
            <person name="Churcher C.M."/>
            <person name="Collins M."/>
            <person name="Connor R."/>
            <person name="Cronin A."/>
            <person name="Davis P."/>
            <person name="Feltwell T."/>
            <person name="Fraser A."/>
            <person name="Gentles S."/>
            <person name="Goble A."/>
            <person name="Hamlin N."/>
            <person name="Harris D.E."/>
            <person name="Hidalgo J."/>
            <person name="Hodgson G."/>
            <person name="Holroyd S."/>
            <person name="Hornsby T."/>
            <person name="Howarth S."/>
            <person name="Huckle E.J."/>
            <person name="Hunt S."/>
            <person name="Jagels K."/>
            <person name="James K.D."/>
            <person name="Jones L."/>
            <person name="Jones M."/>
            <person name="Leather S."/>
            <person name="McDonald S."/>
            <person name="McLean J."/>
            <person name="Mooney P."/>
            <person name="Moule S."/>
            <person name="Mungall K.L."/>
            <person name="Murphy L.D."/>
            <person name="Niblett D."/>
            <person name="Odell C."/>
            <person name="Oliver K."/>
            <person name="O'Neil S."/>
            <person name="Pearson D."/>
            <person name="Quail M.A."/>
            <person name="Rabbinowitsch E."/>
            <person name="Rutherford K.M."/>
            <person name="Rutter S."/>
            <person name="Saunders D."/>
            <person name="Seeger K."/>
            <person name="Sharp S."/>
            <person name="Skelton J."/>
            <person name="Simmonds M.N."/>
            <person name="Squares R."/>
            <person name="Squares S."/>
            <person name="Stevens K."/>
            <person name="Taylor K."/>
            <person name="Taylor R.G."/>
            <person name="Tivey A."/>
            <person name="Walsh S.V."/>
            <person name="Warren T."/>
            <person name="Whitehead S."/>
            <person name="Woodward J.R."/>
            <person name="Volckaert G."/>
            <person name="Aert R."/>
            <person name="Robben J."/>
            <person name="Grymonprez B."/>
            <person name="Weltjens I."/>
            <person name="Vanstreels E."/>
            <person name="Rieger M."/>
            <person name="Schaefer M."/>
            <person name="Mueller-Auer S."/>
            <person name="Gabel C."/>
            <person name="Fuchs M."/>
            <person name="Duesterhoeft A."/>
            <person name="Fritzc C."/>
            <person name="Holzer E."/>
            <person name="Moestl D."/>
            <person name="Hilbert H."/>
            <person name="Borzym K."/>
            <person name="Langer I."/>
            <person name="Beck A."/>
            <person name="Lehrach H."/>
            <person name="Reinhardt R."/>
            <person name="Pohl T.M."/>
            <person name="Eger P."/>
            <person name="Zimmermann W."/>
            <person name="Wedler H."/>
            <person name="Wambutt R."/>
            <person name="Purnelle B."/>
            <person name="Goffeau A."/>
            <person name="Cadieu E."/>
            <person name="Dreano S."/>
            <person name="Gloux S."/>
            <person name="Lelaure V."/>
            <person name="Mottier S."/>
            <person name="Galibert F."/>
            <person name="Aves S.J."/>
            <person name="Xiang Z."/>
            <person name="Hunt C."/>
            <person name="Moore K."/>
            <person name="Hurst S.M."/>
            <person name="Lucas M."/>
            <person name="Rochet M."/>
            <person name="Gaillardin C."/>
            <person name="Tallada V.A."/>
            <person name="Garzon A."/>
            <person name="Thode G."/>
            <person name="Daga R.R."/>
            <person name="Cruzado L."/>
            <person name="Jimenez J."/>
            <person name="Sanchez M."/>
            <person name="del Rey F."/>
            <person name="Benito J."/>
            <person name="Dominguez A."/>
            <person name="Revuelta J.L."/>
            <person name="Moreno S."/>
            <person name="Armstrong J."/>
            <person name="Forsburg S.L."/>
            <person name="Cerutti L."/>
            <person name="Lowe T."/>
            <person name="McCombie W.R."/>
            <person name="Paulsen I."/>
            <person name="Potashkin J."/>
            <person name="Shpakovski G.V."/>
            <person name="Ussery D."/>
            <person name="Barrell B.G."/>
            <person name="Nurse P."/>
        </authorList>
    </citation>
    <scope>NUCLEOTIDE SEQUENCE [LARGE SCALE GENOMIC DNA]</scope>
    <source>
        <strain>972 / ATCC 24843</strain>
    </source>
</reference>
<reference key="2">
    <citation type="journal article" date="2011" name="Science">
        <title>Comparative functional genomics of the fission yeasts.</title>
        <authorList>
            <person name="Rhind N."/>
            <person name="Chen Z."/>
            <person name="Yassour M."/>
            <person name="Thompson D.A."/>
            <person name="Haas B.J."/>
            <person name="Habib N."/>
            <person name="Wapinski I."/>
            <person name="Roy S."/>
            <person name="Lin M.F."/>
            <person name="Heiman D.I."/>
            <person name="Young S.K."/>
            <person name="Furuya K."/>
            <person name="Guo Y."/>
            <person name="Pidoux A."/>
            <person name="Chen H.M."/>
            <person name="Robbertse B."/>
            <person name="Goldberg J.M."/>
            <person name="Aoki K."/>
            <person name="Bayne E.H."/>
            <person name="Berlin A.M."/>
            <person name="Desjardins C.A."/>
            <person name="Dobbs E."/>
            <person name="Dukaj L."/>
            <person name="Fan L."/>
            <person name="FitzGerald M.G."/>
            <person name="French C."/>
            <person name="Gujja S."/>
            <person name="Hansen K."/>
            <person name="Keifenheim D."/>
            <person name="Levin J.Z."/>
            <person name="Mosher R.A."/>
            <person name="Mueller C.A."/>
            <person name="Pfiffner J."/>
            <person name="Priest M."/>
            <person name="Russ C."/>
            <person name="Smialowska A."/>
            <person name="Swoboda P."/>
            <person name="Sykes S.M."/>
            <person name="Vaughn M."/>
            <person name="Vengrova S."/>
            <person name="Yoder R."/>
            <person name="Zeng Q."/>
            <person name="Allshire R."/>
            <person name="Baulcombe D."/>
            <person name="Birren B.W."/>
            <person name="Brown W."/>
            <person name="Ekwall K."/>
            <person name="Kellis M."/>
            <person name="Leatherwood J."/>
            <person name="Levin H."/>
            <person name="Margalit H."/>
            <person name="Martienssen R."/>
            <person name="Nieduszynski C.A."/>
            <person name="Spatafora J.W."/>
            <person name="Friedman N."/>
            <person name="Dalgaard J.Z."/>
            <person name="Baumann P."/>
            <person name="Niki H."/>
            <person name="Regev A."/>
            <person name="Nusbaum C."/>
        </authorList>
    </citation>
    <scope>REVISION OF GENE MODEL</scope>
</reference>
<organism>
    <name type="scientific">Schizosaccharomyces pombe (strain 972 / ATCC 24843)</name>
    <name type="common">Fission yeast</name>
    <dbReference type="NCBI Taxonomy" id="284812"/>
    <lineage>
        <taxon>Eukaryota</taxon>
        <taxon>Fungi</taxon>
        <taxon>Dikarya</taxon>
        <taxon>Ascomycota</taxon>
        <taxon>Taphrinomycotina</taxon>
        <taxon>Schizosaccharomycetes</taxon>
        <taxon>Schizosaccharomycetales</taxon>
        <taxon>Schizosaccharomycetaceae</taxon>
        <taxon>Schizosaccharomyces</taxon>
    </lineage>
</organism>
<proteinExistence type="inferred from homology"/>
<protein>
    <recommendedName>
        <fullName evidence="3">Large ribosomal subunit protein uL15m</fullName>
    </recommendedName>
    <alternativeName>
        <fullName>54S ribosomal protein L10, mitochondrial</fullName>
    </alternativeName>
</protein>
<gene>
    <name type="primary">mrpl10</name>
    <name type="ORF">SPBC9B6.06</name>
</gene>
<sequence length="254" mass="28162">MFNILSRVCRSSSFHGFLRSSGYPRFGASFRGISMLNDLNNSANYQSKKRVGRGPASGLGKTSGRGHKGSGQRRGRRIKPGFEGGQTPITKLFPKVGHSTGHLKKPLRLGLGRVQEWIDRGRLDASKTITMKDLLDSRCCRGIKHGVELTADEPGLLKTAISIEVSKATVQAIQQIKNAGGSITTVYFSPLALRAHLHPSSFRTPPRPPLPVSKKDIRYYTNPHFAGYLANVKNIRELYYGDQRFPYEPIVKDK</sequence>